<accession>A1AG39</accession>
<keyword id="KW-1185">Reference proteome</keyword>
<protein>
    <recommendedName>
        <fullName evidence="1">D-tagatose-1,6-bisphosphate aldolase subunit KbaZ</fullName>
    </recommendedName>
</protein>
<reference key="1">
    <citation type="journal article" date="2007" name="J. Bacteriol.">
        <title>The genome sequence of avian pathogenic Escherichia coli strain O1:K1:H7 shares strong similarities with human extraintestinal pathogenic E. coli genomes.</title>
        <authorList>
            <person name="Johnson T.J."/>
            <person name="Kariyawasam S."/>
            <person name="Wannemuehler Y."/>
            <person name="Mangiamele P."/>
            <person name="Johnson S.J."/>
            <person name="Doetkott C."/>
            <person name="Skyberg J.A."/>
            <person name="Lynne A.M."/>
            <person name="Johnson J.R."/>
            <person name="Nolan L.K."/>
        </authorList>
    </citation>
    <scope>NUCLEOTIDE SEQUENCE [LARGE SCALE GENOMIC DNA]</scope>
</reference>
<gene>
    <name evidence="1" type="primary">kbaZ</name>
    <name type="synonym">agaZ</name>
    <name type="ordered locus">Ecok1_31350</name>
    <name type="ORF">APECO1_3297</name>
</gene>
<sequence>MKHLTEMVRQHKAGKTNGIYAVCSAHPLVLEAAIRYASANQTPLLIEATSNQVDQFGGYTGMTPADFRGFVCQLADSLNFPQDALILGGDHLGPNRWQNLPAAQAMANADDLIKSYVAAGFKKIHLDCSMSCQDDPIPLTDDIVAERAARLAKVAEETCREHFGEADLEYVIGTEVPVPGGAHETLSELAVTTPDAARATLEAHRHAFEKQGLNAIWPRIIALVVQPGVEFDHTNVIDYQPAKAAALSQMVENYETLIFEAHSTDYQTPQSLRQLVIDHFAILKVGPALTFALREALFSLAAIEEELVPAKACSGLRQVLENVMLDRPEYWQSHYHGDGNARRLARGYSYSDRVRYYWPDSQIDDAFAHLVRNLADSPIPLPLISQYLPLQYVKVRSGELQPTPRELIINHIQDILAQYHTACEGQ</sequence>
<comment type="function">
    <text evidence="1">Component of the tagatose-1,6-bisphosphate aldolase KbaYZ that is required for full activity and stability of the Y subunit. Could have a chaperone-like function for the proper and stable folding of KbaY. When expressed alone, KbaZ does not show any aldolase activity.</text>
</comment>
<comment type="pathway">
    <text evidence="1">Carbohydrate metabolism; D-tagatose 6-phosphate degradation; D-glyceraldehyde 3-phosphate and glycerone phosphate from D-tagatose 6-phosphate: step 2/2.</text>
</comment>
<comment type="subunit">
    <text evidence="1">Forms a complex with KbaY.</text>
</comment>
<comment type="similarity">
    <text evidence="1">Belongs to the GatZ/KbaZ family. KbaZ subfamily.</text>
</comment>
<evidence type="ECO:0000255" key="1">
    <source>
        <dbReference type="HAMAP-Rule" id="MF_01295"/>
    </source>
</evidence>
<proteinExistence type="inferred from homology"/>
<dbReference type="EMBL" id="CP000468">
    <property type="protein sequence ID" value="ABJ02629.1"/>
    <property type="molecule type" value="Genomic_DNA"/>
</dbReference>
<dbReference type="RefSeq" id="WP_000681931.1">
    <property type="nucleotide sequence ID" value="NZ_CADILS010000003.1"/>
</dbReference>
<dbReference type="SMR" id="A1AG39"/>
<dbReference type="KEGG" id="ecv:APECO1_3297"/>
<dbReference type="HOGENOM" id="CLU_053334_0_0_6"/>
<dbReference type="UniPathway" id="UPA00704">
    <property type="reaction ID" value="UER00716"/>
</dbReference>
<dbReference type="Proteomes" id="UP000008216">
    <property type="component" value="Chromosome"/>
</dbReference>
<dbReference type="GO" id="GO:0005886">
    <property type="term" value="C:plasma membrane"/>
    <property type="evidence" value="ECO:0007669"/>
    <property type="project" value="TreeGrafter"/>
</dbReference>
<dbReference type="GO" id="GO:0005975">
    <property type="term" value="P:carbohydrate metabolic process"/>
    <property type="evidence" value="ECO:0007669"/>
    <property type="project" value="InterPro"/>
</dbReference>
<dbReference type="GO" id="GO:2001059">
    <property type="term" value="P:D-tagatose 6-phosphate catabolic process"/>
    <property type="evidence" value="ECO:0007669"/>
    <property type="project" value="UniProtKB-UniRule"/>
</dbReference>
<dbReference type="GO" id="GO:0009401">
    <property type="term" value="P:phosphoenolpyruvate-dependent sugar phosphotransferase system"/>
    <property type="evidence" value="ECO:0007669"/>
    <property type="project" value="TreeGrafter"/>
</dbReference>
<dbReference type="FunFam" id="3.20.20.70:FF:000141">
    <property type="entry name" value="D-tagatose-1,6-bisphosphate aldolase subunit GatZ"/>
    <property type="match status" value="1"/>
</dbReference>
<dbReference type="Gene3D" id="3.20.20.70">
    <property type="entry name" value="Aldolase class I"/>
    <property type="match status" value="1"/>
</dbReference>
<dbReference type="Gene3D" id="1.10.400.20">
    <property type="entry name" value="putative tagatose 6-phosphate kinase domain like"/>
    <property type="match status" value="1"/>
</dbReference>
<dbReference type="HAMAP" id="MF_01295">
    <property type="entry name" value="Tagatose_aldol_KbaZ"/>
    <property type="match status" value="1"/>
</dbReference>
<dbReference type="InterPro" id="IPR013785">
    <property type="entry name" value="Aldolase_TIM"/>
</dbReference>
<dbReference type="InterPro" id="IPR012062">
    <property type="entry name" value="GatZ/KbaZ-like"/>
</dbReference>
<dbReference type="InterPro" id="IPR050303">
    <property type="entry name" value="GatZ_KbaZ_carbometab"/>
</dbReference>
<dbReference type="InterPro" id="IPR023435">
    <property type="entry name" value="TagBP_ald_KbaZ"/>
</dbReference>
<dbReference type="NCBIfam" id="TIGR02810">
    <property type="entry name" value="agaZ_gatZ"/>
    <property type="match status" value="1"/>
</dbReference>
<dbReference type="NCBIfam" id="NF012002">
    <property type="entry name" value="PRK15458.1"/>
    <property type="match status" value="1"/>
</dbReference>
<dbReference type="PANTHER" id="PTHR32502:SF2">
    <property type="entry name" value="D-TAGATOSE-1,6-BISPHOSPHATE ALDOLASE SUBUNIT KBAZ"/>
    <property type="match status" value="1"/>
</dbReference>
<dbReference type="PANTHER" id="PTHR32502">
    <property type="entry name" value="N-ACETYLGALACTOSAMINE PERMEASE II COMPONENT-RELATED"/>
    <property type="match status" value="1"/>
</dbReference>
<dbReference type="Pfam" id="PF08013">
    <property type="entry name" value="GatZ_KbaZ-like"/>
    <property type="match status" value="1"/>
</dbReference>
<dbReference type="PIRSF" id="PIRSF009264">
    <property type="entry name" value="TagBP_ald_AgaZ"/>
    <property type="match status" value="1"/>
</dbReference>
<dbReference type="SUPFAM" id="SSF51569">
    <property type="entry name" value="Aldolase"/>
    <property type="match status" value="1"/>
</dbReference>
<organism>
    <name type="scientific">Escherichia coli O1:K1 / APEC</name>
    <dbReference type="NCBI Taxonomy" id="405955"/>
    <lineage>
        <taxon>Bacteria</taxon>
        <taxon>Pseudomonadati</taxon>
        <taxon>Pseudomonadota</taxon>
        <taxon>Gammaproteobacteria</taxon>
        <taxon>Enterobacterales</taxon>
        <taxon>Enterobacteriaceae</taxon>
        <taxon>Escherichia</taxon>
    </lineage>
</organism>
<name>KBAZ_ECOK1</name>
<feature type="chain" id="PRO_0000372535" description="D-tagatose-1,6-bisphosphate aldolase subunit KbaZ">
    <location>
        <begin position="1"/>
        <end position="426"/>
    </location>
</feature>